<proteinExistence type="inferred from homology"/>
<reference key="1">
    <citation type="journal article" date="2002" name="Lancet">
        <title>Genome and virulence determinants of high virulence community-acquired MRSA.</title>
        <authorList>
            <person name="Baba T."/>
            <person name="Takeuchi F."/>
            <person name="Kuroda M."/>
            <person name="Yuzawa H."/>
            <person name="Aoki K."/>
            <person name="Oguchi A."/>
            <person name="Nagai Y."/>
            <person name="Iwama N."/>
            <person name="Asano K."/>
            <person name="Naimi T."/>
            <person name="Kuroda H."/>
            <person name="Cui L."/>
            <person name="Yamamoto K."/>
            <person name="Hiramatsu K."/>
        </authorList>
    </citation>
    <scope>NUCLEOTIDE SEQUENCE [LARGE SCALE GENOMIC DNA]</scope>
    <source>
        <strain>MW2</strain>
    </source>
</reference>
<gene>
    <name type="primary">icaD</name>
    <name type="ordered locus">MW2587</name>
</gene>
<organism>
    <name type="scientific">Staphylococcus aureus (strain MW2)</name>
    <dbReference type="NCBI Taxonomy" id="196620"/>
    <lineage>
        <taxon>Bacteria</taxon>
        <taxon>Bacillati</taxon>
        <taxon>Bacillota</taxon>
        <taxon>Bacilli</taxon>
        <taxon>Bacillales</taxon>
        <taxon>Staphylococcaceae</taxon>
        <taxon>Staphylococcus</taxon>
    </lineage>
</organism>
<evidence type="ECO:0000250" key="1"/>
<evidence type="ECO:0000255" key="2"/>
<evidence type="ECO:0000305" key="3"/>
<accession>Q79ZV3</accession>
<feature type="chain" id="PRO_0000084140" description="Poly-beta-1,6-N-acetyl-D-glucosamine synthesis protein IcaD">
    <location>
        <begin position="1"/>
        <end position="101"/>
    </location>
</feature>
<feature type="transmembrane region" description="Helical" evidence="2">
    <location>
        <begin position="24"/>
        <end position="46"/>
    </location>
</feature>
<feature type="transmembrane region" description="Helical" evidence="2">
    <location>
        <begin position="71"/>
        <end position="93"/>
    </location>
</feature>
<comment type="function">
    <text evidence="1">Necessary for the synthesis of poly-beta-1,6-N-acetyl-D-glucosamine (PNAG, also referred to as PIA), a biofilm adhesin polysaccharide. Is required for full IcaA N-acetylglucosaminyltransferase activity (By similarity).</text>
</comment>
<comment type="subcellular location">
    <subcellularLocation>
        <location evidence="1">Cell membrane</location>
        <topology evidence="1">Multi-pass membrane protein</topology>
    </subcellularLocation>
</comment>
<comment type="similarity">
    <text evidence="3">Belongs to the IcaD family.</text>
</comment>
<name>ICAD_STAAW</name>
<dbReference type="EMBL" id="BA000033">
    <property type="protein sequence ID" value="BAB96452.1"/>
    <property type="molecule type" value="Genomic_DNA"/>
</dbReference>
<dbReference type="RefSeq" id="WP_000240580.1">
    <property type="nucleotide sequence ID" value="NC_003923.1"/>
</dbReference>
<dbReference type="KEGG" id="sam:MW2587"/>
<dbReference type="HOGENOM" id="CLU_2289916_0_0_9"/>
<dbReference type="GO" id="GO:0005886">
    <property type="term" value="C:plasma membrane"/>
    <property type="evidence" value="ECO:0007669"/>
    <property type="project" value="UniProtKB-SubCell"/>
</dbReference>
<dbReference type="InterPro" id="IPR020510">
    <property type="entry name" value="IcaD"/>
</dbReference>
<dbReference type="NCBIfam" id="TIGR03932">
    <property type="entry name" value="PIA_icaD"/>
    <property type="match status" value="1"/>
</dbReference>
<protein>
    <recommendedName>
        <fullName>Poly-beta-1,6-N-acetyl-D-glucosamine synthesis protein IcaD</fullName>
        <shortName>PGA synthesis protein IcaD</shortName>
        <shortName>Poly-beta-1,6-GlcNAc synthesis protein IcaD</shortName>
    </recommendedName>
    <alternativeName>
        <fullName>Biofilm polysaccharide intercellular adhesin synthesis protein IcaD</fullName>
        <shortName>Biofilm PIA synthesis protein IcaD</shortName>
    </alternativeName>
    <alternativeName>
        <fullName>Intercellular adhesion protein D</fullName>
    </alternativeName>
</protein>
<keyword id="KW-1003">Cell membrane</keyword>
<keyword id="KW-0472">Membrane</keyword>
<keyword id="KW-0812">Transmembrane</keyword>
<keyword id="KW-1133">Transmembrane helix</keyword>
<sequence length="101" mass="11783">MVKPRQREYPTLKSSLNIVRETALIAISCVFWIYCLVVLLVYIGTIFEIHDESINTIRVALNIENTEILDIFETMGIFAIIIFVFFTISILIQKWQRGRES</sequence>